<comment type="function">
    <text evidence="5">Catalyzes the oxidation of D-2-hydroxyglutarate (D-2-HGA) to 2-oxoglutarate. Appears to be the only D2HGDH in P.ananatis, providing the way to recycle D-2-HGA produced during L-serine synthesis by SerA, by converting it back to 2-oxoglutarate. Is involved in the utilization of D-2-HGA, that can support the growth of P.ananatis as a sole carbon source, although it barely serves as a good substrate. The physiological molecule that functions as the primary electron acceptor during D-2-HGA oxidation by YdiJ in P.ananatis is unknown. Shows strict substrate specificity towards D-2-HGA, since it has no detectable activity on L-2-hydroxyglutarate, L-malate, D-malate, L-lactate, D-lactate, L-tartrate, D-tartrate, L-glycerate, D-glycerate, glutarate, or pyruvate.</text>
</comment>
<comment type="catalytic activity">
    <reaction evidence="5">
        <text>(R)-2-hydroxyglutarate + A = 2-oxoglutarate + AH2</text>
        <dbReference type="Rhea" id="RHEA:38295"/>
        <dbReference type="ChEBI" id="CHEBI:13193"/>
        <dbReference type="ChEBI" id="CHEBI:15801"/>
        <dbReference type="ChEBI" id="CHEBI:16810"/>
        <dbReference type="ChEBI" id="CHEBI:17499"/>
        <dbReference type="EC" id="1.1.99.39"/>
    </reaction>
    <physiologicalReaction direction="left-to-right" evidence="5">
        <dbReference type="Rhea" id="RHEA:38296"/>
    </physiologicalReaction>
</comment>
<comment type="cofactor">
    <cofactor evidence="1">
        <name>[4Fe-4S] cluster</name>
        <dbReference type="ChEBI" id="CHEBI:49883"/>
    </cofactor>
</comment>
<comment type="cofactor">
    <cofactor evidence="1">
        <name>FAD</name>
        <dbReference type="ChEBI" id="CHEBI:57692"/>
    </cofactor>
</comment>
<comment type="activity regulation">
    <text evidence="5">Activity is completely inhibited by the addition of 0.5 mM Mn(2+), Ni(2+), or Co(2+) and partially inhibited by 0.5 mM Zn(2+).</text>
</comment>
<comment type="biophysicochemical properties">
    <kinetics>
        <KM evidence="5">208 uM for (R)-2-hydroxyglutarate</KM>
        <Vmax evidence="5">1.17 umol/min/mg enzyme</Vmax>
        <text evidence="5">kcat is 9.7 sec(-1).</text>
    </kinetics>
    <phDependence>
        <text evidence="5">Optimum pH is 7.5.</text>
    </phDependence>
    <temperatureDependence>
        <text evidence="5">Optimum temperature is 45 degrees Celsius.</text>
    </temperatureDependence>
</comment>
<comment type="subunit">
    <text evidence="5">Homotetramer.</text>
</comment>
<comment type="disruption phenotype">
    <text evidence="5">Disruption of this gene leads to the significant accumulation of D-2-HGA, and thus impairs D-2-HGA utilization.</text>
</comment>
<comment type="similarity">
    <text evidence="7">In the N-terminal section; belongs to the FAD-binding oxidoreductase/transferase type 4 family.</text>
</comment>
<proteinExistence type="evidence at protein level"/>
<evidence type="ECO:0000250" key="1">
    <source>
        <dbReference type="UniProtKB" id="P77748"/>
    </source>
</evidence>
<evidence type="ECO:0000250" key="2">
    <source>
        <dbReference type="UniProtKB" id="Q8N465"/>
    </source>
</evidence>
<evidence type="ECO:0000255" key="3">
    <source>
        <dbReference type="PROSITE-ProRule" id="PRU00711"/>
    </source>
</evidence>
<evidence type="ECO:0000255" key="4">
    <source>
        <dbReference type="PROSITE-ProRule" id="PRU00718"/>
    </source>
</evidence>
<evidence type="ECO:0000269" key="5">
    <source>
    </source>
</evidence>
<evidence type="ECO:0000303" key="6">
    <source>
    </source>
</evidence>
<evidence type="ECO:0000305" key="7"/>
<evidence type="ECO:0000312" key="8">
    <source>
        <dbReference type="EMBL" id="BAK11140.1"/>
    </source>
</evidence>
<organism>
    <name type="scientific">Pantoea ananatis (strain AJ13355)</name>
    <dbReference type="NCBI Taxonomy" id="932677"/>
    <lineage>
        <taxon>Bacteria</taxon>
        <taxon>Pseudomonadati</taxon>
        <taxon>Pseudomonadota</taxon>
        <taxon>Gammaproteobacteria</taxon>
        <taxon>Enterobacterales</taxon>
        <taxon>Erwiniaceae</taxon>
        <taxon>Pantoea</taxon>
    </lineage>
</organism>
<keyword id="KW-0004">4Fe-4S</keyword>
<keyword id="KW-0274">FAD</keyword>
<keyword id="KW-0285">Flavoprotein</keyword>
<keyword id="KW-0408">Iron</keyword>
<keyword id="KW-0411">Iron-sulfur</keyword>
<keyword id="KW-0479">Metal-binding</keyword>
<keyword id="KW-0560">Oxidoreductase</keyword>
<reference key="1">
    <citation type="journal article" date="2012" name="Appl. Microbiol. Biotechnol.">
        <title>The complete genome sequence of Pantoea ananatis AJ13355, an organism with great biotechnological potential.</title>
        <authorList>
            <person name="Hara Y."/>
            <person name="Kadotani N."/>
            <person name="Izui H."/>
            <person name="Katashkina J.I."/>
            <person name="Kuvaeva T.M."/>
            <person name="Andreeva I.G."/>
            <person name="Golubeva L.I."/>
            <person name="Malko D.B."/>
            <person name="Makeev V.J."/>
            <person name="Mashko S.V."/>
            <person name="Kozlov Y.I."/>
        </authorList>
    </citation>
    <scope>NUCLEOTIDE SEQUENCE [LARGE SCALE GENOMIC DNA]</scope>
    <source>
        <strain>AJ13355</strain>
    </source>
</reference>
<reference key="2">
    <citation type="journal article" date="2022" name="Microorganisms">
        <title>Revealing a New Family of D-2-Hydroxyglutarate Dehydrogenases in Escherichia coli and Pantoea ananatis Encoded by ydiJ.</title>
        <authorList>
            <person name="Samsonov V.V."/>
            <person name="Kuznetsova A.A."/>
            <person name="Rostova J.G."/>
            <person name="Samsonova S.A."/>
            <person name="Ziyatdinov M.K."/>
            <person name="Kiriukhin M.Y."/>
        </authorList>
    </citation>
    <scope>FUNCTION</scope>
    <scope>CATALYTIC ACTIVITY</scope>
    <scope>BIOPHYSICOCHEMICAL PROPERTIES</scope>
    <scope>SUBSTRATE SPECIFICITY</scope>
    <scope>SUBUNIT</scope>
    <scope>DISRUPTION PHENOTYPE</scope>
    <scope>ACTIVITY REGULATION</scope>
    <source>
        <strain>AJ13355</strain>
    </source>
</reference>
<dbReference type="EC" id="1.1.99.39" evidence="5"/>
<dbReference type="EMBL" id="AP012032">
    <property type="protein sequence ID" value="BAK11140.1"/>
    <property type="molecule type" value="Genomic_DNA"/>
</dbReference>
<dbReference type="SMR" id="A0A0H3KZS3"/>
<dbReference type="KEGG" id="paj:PAJ_1060"/>
<dbReference type="PATRIC" id="fig|932677.3.peg.1220"/>
<dbReference type="eggNOG" id="COG0247">
    <property type="taxonomic scope" value="Bacteria"/>
</dbReference>
<dbReference type="eggNOG" id="COG0277">
    <property type="taxonomic scope" value="Bacteria"/>
</dbReference>
<dbReference type="HOGENOM" id="CLU_010756_1_0_6"/>
<dbReference type="Proteomes" id="UP000006690">
    <property type="component" value="Chromosome"/>
</dbReference>
<dbReference type="GO" id="GO:0051539">
    <property type="term" value="F:4 iron, 4 sulfur cluster binding"/>
    <property type="evidence" value="ECO:0007669"/>
    <property type="project" value="UniProtKB-KW"/>
</dbReference>
<dbReference type="GO" id="GO:0004458">
    <property type="term" value="F:D-lactate dehydrogenase (cytochrome) activity"/>
    <property type="evidence" value="ECO:0007669"/>
    <property type="project" value="TreeGrafter"/>
</dbReference>
<dbReference type="GO" id="GO:0008720">
    <property type="term" value="F:D-lactate dehydrogenase activity"/>
    <property type="evidence" value="ECO:0007669"/>
    <property type="project" value="TreeGrafter"/>
</dbReference>
<dbReference type="GO" id="GO:0071949">
    <property type="term" value="F:FAD binding"/>
    <property type="evidence" value="ECO:0007669"/>
    <property type="project" value="InterPro"/>
</dbReference>
<dbReference type="GO" id="GO:0046872">
    <property type="term" value="F:metal ion binding"/>
    <property type="evidence" value="ECO:0007669"/>
    <property type="project" value="UniProtKB-KW"/>
</dbReference>
<dbReference type="GO" id="GO:1903457">
    <property type="term" value="P:lactate catabolic process"/>
    <property type="evidence" value="ECO:0007669"/>
    <property type="project" value="TreeGrafter"/>
</dbReference>
<dbReference type="FunFam" id="3.30.465.10:FF:000024">
    <property type="entry name" value="Oxidoreductase, FAD-binding protein"/>
    <property type="match status" value="1"/>
</dbReference>
<dbReference type="FunFam" id="3.30.70.2740:FF:000003">
    <property type="entry name" value="Oxidoreductase, FAD-binding, putative"/>
    <property type="match status" value="1"/>
</dbReference>
<dbReference type="Gene3D" id="3.30.465.10">
    <property type="match status" value="1"/>
</dbReference>
<dbReference type="Gene3D" id="3.30.70.2740">
    <property type="match status" value="1"/>
</dbReference>
<dbReference type="Gene3D" id="1.10.45.10">
    <property type="entry name" value="Vanillyl-alcohol Oxidase, Chain A, domain 4"/>
    <property type="match status" value="1"/>
</dbReference>
<dbReference type="InterPro" id="IPR017896">
    <property type="entry name" value="4Fe4S_Fe-S-bd"/>
</dbReference>
<dbReference type="InterPro" id="IPR017900">
    <property type="entry name" value="4Fe4S_Fe_S_CS"/>
</dbReference>
<dbReference type="InterPro" id="IPR004113">
    <property type="entry name" value="FAD-bd_oxidored_4_C"/>
</dbReference>
<dbReference type="InterPro" id="IPR016166">
    <property type="entry name" value="FAD-bd_PCMH"/>
</dbReference>
<dbReference type="InterPro" id="IPR036318">
    <property type="entry name" value="FAD-bd_PCMH-like_sf"/>
</dbReference>
<dbReference type="InterPro" id="IPR016169">
    <property type="entry name" value="FAD-bd_PCMH_sub2"/>
</dbReference>
<dbReference type="InterPro" id="IPR016164">
    <property type="entry name" value="FAD-linked_Oxase-like_C"/>
</dbReference>
<dbReference type="InterPro" id="IPR006094">
    <property type="entry name" value="Oxid_FAD_bind_N"/>
</dbReference>
<dbReference type="InterPro" id="IPR016171">
    <property type="entry name" value="Vanillyl_alc_oxidase_C-sub2"/>
</dbReference>
<dbReference type="PANTHER" id="PTHR11748:SF119">
    <property type="entry name" value="D-2-HYDROXYGLUTARATE DEHYDROGENASE"/>
    <property type="match status" value="1"/>
</dbReference>
<dbReference type="PANTHER" id="PTHR11748">
    <property type="entry name" value="D-LACTATE DEHYDROGENASE"/>
    <property type="match status" value="1"/>
</dbReference>
<dbReference type="Pfam" id="PF02913">
    <property type="entry name" value="FAD-oxidase_C"/>
    <property type="match status" value="1"/>
</dbReference>
<dbReference type="Pfam" id="PF01565">
    <property type="entry name" value="FAD_binding_4"/>
    <property type="match status" value="1"/>
</dbReference>
<dbReference type="Pfam" id="PF13183">
    <property type="entry name" value="Fer4_8"/>
    <property type="match status" value="1"/>
</dbReference>
<dbReference type="SUPFAM" id="SSF46548">
    <property type="entry name" value="alpha-helical ferredoxin"/>
    <property type="match status" value="1"/>
</dbReference>
<dbReference type="SUPFAM" id="SSF56176">
    <property type="entry name" value="FAD-binding/transporter-associated domain-like"/>
    <property type="match status" value="1"/>
</dbReference>
<dbReference type="SUPFAM" id="SSF55103">
    <property type="entry name" value="FAD-linked oxidases, C-terminal domain"/>
    <property type="match status" value="1"/>
</dbReference>
<dbReference type="PROSITE" id="PS00198">
    <property type="entry name" value="4FE4S_FER_1"/>
    <property type="match status" value="1"/>
</dbReference>
<dbReference type="PROSITE" id="PS51387">
    <property type="entry name" value="FAD_PCMH"/>
    <property type="match status" value="1"/>
</dbReference>
<name>D2HDH_PANAA</name>
<sequence length="1022" mass="113963">MVTYSMIPQISQAPGLIQRVLTFLETLKAQGFTGDTATSYADRLSLSTDNSIYQLLPDAVLFPRSTADVALIARLAGEAAFSSLVFTPRGGGTGTNGQSLNQGIIVDMSRHMNRILEINTEQRWVRVEAGVVKDQLNAYLKPFGFFFSPELSTSNRATLGGMINTDASGQGSLVYGKTSDHVLGLRAVLLGGDILDTRPVPTALAENLAQTPTPEGRIYQQVLTRCREHRELILEKFPKLNRFLTGYDLRHVFSDDMQTFDLTRLLCGAEGTLAFISEARLDITPLPKVRRVVNIKYDAFDSALRNAPLMVEAQALSVETVDSKVLNLAREDIVWHSVRELITAIPDKEMLGLNIVEFAGDDAGQIDRQITQLCARLDTLMTQQQGGVIGYQLCDDLDGIERIYNMRKKAVGLLGNAKGRAKPIPFVEDTAVPPEHLADYIVEFRALLDSHGLSYGMFGHVDAGVLHVRPALDMCDPHQEMMMKQISDEVVALTARYGGLLWGEHGKGFRAQYSPAFFGETLFNELRRIKAAFDPHNRLNPGKICTPFDSEAAMMQVDATKRGSYDRQIPLQVRETWRGALECNGNGLCFNFDARSPMCPSMKITRNRIHSPKGRATLTREWLRLLAEQGADPVMLEKKLPESSLSLRALISRMRNTWYANKGEYDFSHEVKEAMSGCLACKACSTQCPIKIDVPAFRSRFLQLYHTRYLRPLSDHLVAGVESYAPLMAKAPGVFNFFLKQPWATSFSKTHIGMVDLPLLSSPTLKQQLSGHPAMNMTLEQLEALSETQRAQKVLVVQDPFTSFYEAKLVHDFIRLIEKLGYQPVLLPFSPNGKAQHVKGFLQRFARTASKTADFLNRVAKLGMPMVGIDPATVLCYRDEYHQMLGEARGDFNVLLVHEWLHQALQEREVQVTSGEAWYLFAHCTEVTALPGTPGQWQAIFSRFGAKLENINVGCCGMAGTYGHESQNLENSLGIYALSWHPQLQKLPRQRCLATGFSCRSQVKRVEGNGMRHPLQALLELI</sequence>
<feature type="chain" id="PRO_0000457149" description="D-2-hydroxyglutarate dehydrogenase">
    <location>
        <begin position="1"/>
        <end position="1022"/>
    </location>
</feature>
<feature type="domain" description="FAD-binding PCMH-type" evidence="4">
    <location>
        <begin position="53"/>
        <end position="286"/>
    </location>
</feature>
<feature type="domain" description="4Fe-4S ferredoxin-type" evidence="3">
    <location>
        <begin position="667"/>
        <end position="700"/>
    </location>
</feature>
<feature type="binding site" evidence="2">
    <location>
        <position position="407"/>
    </location>
    <ligand>
        <name>(R)-2-hydroxyglutarate</name>
        <dbReference type="ChEBI" id="CHEBI:15801"/>
    </ligand>
</feature>
<feature type="binding site" evidence="2">
    <location>
        <position position="505"/>
    </location>
    <ligand>
        <name>(R)-2-hydroxyglutarate</name>
        <dbReference type="ChEBI" id="CHEBI:15801"/>
    </ligand>
</feature>
<feature type="binding site" evidence="3">
    <location>
        <position position="678"/>
    </location>
    <ligand>
        <name>[4Fe-4S] cluster</name>
        <dbReference type="ChEBI" id="CHEBI:49883"/>
    </ligand>
</feature>
<feature type="binding site" evidence="3">
    <location>
        <position position="681"/>
    </location>
    <ligand>
        <name>[4Fe-4S] cluster</name>
        <dbReference type="ChEBI" id="CHEBI:49883"/>
    </ligand>
</feature>
<feature type="binding site" evidence="3">
    <location>
        <position position="684"/>
    </location>
    <ligand>
        <name>[4Fe-4S] cluster</name>
        <dbReference type="ChEBI" id="CHEBI:49883"/>
    </ligand>
</feature>
<feature type="binding site" evidence="3">
    <location>
        <position position="688"/>
    </location>
    <ligand>
        <name>[4Fe-4S] cluster</name>
        <dbReference type="ChEBI" id="CHEBI:49883"/>
    </ligand>
</feature>
<protein>
    <recommendedName>
        <fullName evidence="6">D-2-hydroxyglutarate dehydrogenase</fullName>
        <shortName evidence="6">D2HGDH</shortName>
        <ecNumber evidence="5">1.1.99.39</ecNumber>
    </recommendedName>
</protein>
<gene>
    <name evidence="8" type="primary">ydiJ</name>
    <name evidence="8" type="ordered locus">PAJ_1060</name>
</gene>
<accession>A0A0H3KZS3</accession>